<proteinExistence type="inferred from homology"/>
<keyword id="KW-0030">Aminoacyl-tRNA synthetase</keyword>
<keyword id="KW-0067">ATP-binding</keyword>
<keyword id="KW-0963">Cytoplasm</keyword>
<keyword id="KW-0436">Ligase</keyword>
<keyword id="KW-0547">Nucleotide-binding</keyword>
<keyword id="KW-0648">Protein biosynthesis</keyword>
<name>SYH_CLOPS</name>
<sequence>MAIQAQKGTKDMLPNDAYKWHYIEEKLRKISAEYGIREIRTPMFEATELFKRGVGETTDVVQKEMYTFEDKGGRSITLKPEGTAPAVRAFIENSLYADAQPTKMFYFTPCFRYEKMQKGRLREFHQYGIEVFGSQEASIDAEILSLVMRALTEDFGIKGLSLNINSLGCPKCRAKFNEALKQYLKENYDNLCETCKTRFEKNPMRIIDCKEKRCKEIVKEAPSILDYICEECSDHFSKLKAYLDVMGIEYNIDPQIVRGLDYYSKTVFEVIKDGLTVCGGGRYDYLVEEVDGPKTPAMGFGLGLERLLLILDEEGIEIPEPVRCEVYIGSMGDRAKLEAMKLAFNLRKSGIKAEIDHLGKSVKAQMKYANKIGAKYTFVIGDSEIEENKIKIKRMSDGEQFEVSLDINEIVNIVK</sequence>
<accession>Q0SRP7</accession>
<feature type="chain" id="PRO_1000016348" description="Histidine--tRNA ligase">
    <location>
        <begin position="1"/>
        <end position="415"/>
    </location>
</feature>
<organism>
    <name type="scientific">Clostridium perfringens (strain SM101 / Type A)</name>
    <dbReference type="NCBI Taxonomy" id="289380"/>
    <lineage>
        <taxon>Bacteria</taxon>
        <taxon>Bacillati</taxon>
        <taxon>Bacillota</taxon>
        <taxon>Clostridia</taxon>
        <taxon>Eubacteriales</taxon>
        <taxon>Clostridiaceae</taxon>
        <taxon>Clostridium</taxon>
    </lineage>
</organism>
<dbReference type="EC" id="6.1.1.21" evidence="1"/>
<dbReference type="EMBL" id="CP000312">
    <property type="protein sequence ID" value="ABG86498.1"/>
    <property type="molecule type" value="Genomic_DNA"/>
</dbReference>
<dbReference type="RefSeq" id="WP_011592778.1">
    <property type="nucleotide sequence ID" value="NC_008262.1"/>
</dbReference>
<dbReference type="SMR" id="Q0SRP7"/>
<dbReference type="KEGG" id="cpr:CPR_1900"/>
<dbReference type="Proteomes" id="UP000001824">
    <property type="component" value="Chromosome"/>
</dbReference>
<dbReference type="GO" id="GO:0005737">
    <property type="term" value="C:cytoplasm"/>
    <property type="evidence" value="ECO:0007669"/>
    <property type="project" value="UniProtKB-SubCell"/>
</dbReference>
<dbReference type="GO" id="GO:0005524">
    <property type="term" value="F:ATP binding"/>
    <property type="evidence" value="ECO:0007669"/>
    <property type="project" value="UniProtKB-UniRule"/>
</dbReference>
<dbReference type="GO" id="GO:0140096">
    <property type="term" value="F:catalytic activity, acting on a protein"/>
    <property type="evidence" value="ECO:0007669"/>
    <property type="project" value="UniProtKB-ARBA"/>
</dbReference>
<dbReference type="GO" id="GO:0004821">
    <property type="term" value="F:histidine-tRNA ligase activity"/>
    <property type="evidence" value="ECO:0007669"/>
    <property type="project" value="UniProtKB-UniRule"/>
</dbReference>
<dbReference type="GO" id="GO:0016740">
    <property type="term" value="F:transferase activity"/>
    <property type="evidence" value="ECO:0007669"/>
    <property type="project" value="UniProtKB-ARBA"/>
</dbReference>
<dbReference type="GO" id="GO:0006427">
    <property type="term" value="P:histidyl-tRNA aminoacylation"/>
    <property type="evidence" value="ECO:0007669"/>
    <property type="project" value="UniProtKB-UniRule"/>
</dbReference>
<dbReference type="CDD" id="cd00773">
    <property type="entry name" value="HisRS-like_core"/>
    <property type="match status" value="1"/>
</dbReference>
<dbReference type="CDD" id="cd00859">
    <property type="entry name" value="HisRS_anticodon"/>
    <property type="match status" value="1"/>
</dbReference>
<dbReference type="FunFam" id="3.30.930.10:FF:000005">
    <property type="entry name" value="Histidine--tRNA ligase"/>
    <property type="match status" value="1"/>
</dbReference>
<dbReference type="Gene3D" id="3.40.50.800">
    <property type="entry name" value="Anticodon-binding domain"/>
    <property type="match status" value="1"/>
</dbReference>
<dbReference type="Gene3D" id="3.30.930.10">
    <property type="entry name" value="Bira Bifunctional Protein, Domain 2"/>
    <property type="match status" value="1"/>
</dbReference>
<dbReference type="HAMAP" id="MF_00127">
    <property type="entry name" value="His_tRNA_synth"/>
    <property type="match status" value="1"/>
</dbReference>
<dbReference type="InterPro" id="IPR006195">
    <property type="entry name" value="aa-tRNA-synth_II"/>
</dbReference>
<dbReference type="InterPro" id="IPR045864">
    <property type="entry name" value="aa-tRNA-synth_II/BPL/LPL"/>
</dbReference>
<dbReference type="InterPro" id="IPR004154">
    <property type="entry name" value="Anticodon-bd"/>
</dbReference>
<dbReference type="InterPro" id="IPR036621">
    <property type="entry name" value="Anticodon-bd_dom_sf"/>
</dbReference>
<dbReference type="InterPro" id="IPR015807">
    <property type="entry name" value="His-tRNA-ligase"/>
</dbReference>
<dbReference type="InterPro" id="IPR041715">
    <property type="entry name" value="HisRS-like_core"/>
</dbReference>
<dbReference type="InterPro" id="IPR004516">
    <property type="entry name" value="HisRS/HisZ"/>
</dbReference>
<dbReference type="InterPro" id="IPR033656">
    <property type="entry name" value="HisRS_anticodon"/>
</dbReference>
<dbReference type="NCBIfam" id="TIGR00442">
    <property type="entry name" value="hisS"/>
    <property type="match status" value="1"/>
</dbReference>
<dbReference type="PANTHER" id="PTHR43707:SF1">
    <property type="entry name" value="HISTIDINE--TRNA LIGASE, MITOCHONDRIAL-RELATED"/>
    <property type="match status" value="1"/>
</dbReference>
<dbReference type="PANTHER" id="PTHR43707">
    <property type="entry name" value="HISTIDYL-TRNA SYNTHETASE"/>
    <property type="match status" value="1"/>
</dbReference>
<dbReference type="Pfam" id="PF03129">
    <property type="entry name" value="HGTP_anticodon"/>
    <property type="match status" value="1"/>
</dbReference>
<dbReference type="Pfam" id="PF13393">
    <property type="entry name" value="tRNA-synt_His"/>
    <property type="match status" value="1"/>
</dbReference>
<dbReference type="PIRSF" id="PIRSF001549">
    <property type="entry name" value="His-tRNA_synth"/>
    <property type="match status" value="1"/>
</dbReference>
<dbReference type="SUPFAM" id="SSF52954">
    <property type="entry name" value="Class II aaRS ABD-related"/>
    <property type="match status" value="1"/>
</dbReference>
<dbReference type="SUPFAM" id="SSF55681">
    <property type="entry name" value="Class II aaRS and biotin synthetases"/>
    <property type="match status" value="1"/>
</dbReference>
<dbReference type="PROSITE" id="PS50862">
    <property type="entry name" value="AA_TRNA_LIGASE_II"/>
    <property type="match status" value="1"/>
</dbReference>
<evidence type="ECO:0000255" key="1">
    <source>
        <dbReference type="HAMAP-Rule" id="MF_00127"/>
    </source>
</evidence>
<gene>
    <name evidence="1" type="primary">hisS</name>
    <name type="ordered locus">CPR_1900</name>
</gene>
<comment type="catalytic activity">
    <reaction evidence="1">
        <text>tRNA(His) + L-histidine + ATP = L-histidyl-tRNA(His) + AMP + diphosphate + H(+)</text>
        <dbReference type="Rhea" id="RHEA:17313"/>
        <dbReference type="Rhea" id="RHEA-COMP:9665"/>
        <dbReference type="Rhea" id="RHEA-COMP:9689"/>
        <dbReference type="ChEBI" id="CHEBI:15378"/>
        <dbReference type="ChEBI" id="CHEBI:30616"/>
        <dbReference type="ChEBI" id="CHEBI:33019"/>
        <dbReference type="ChEBI" id="CHEBI:57595"/>
        <dbReference type="ChEBI" id="CHEBI:78442"/>
        <dbReference type="ChEBI" id="CHEBI:78527"/>
        <dbReference type="ChEBI" id="CHEBI:456215"/>
        <dbReference type="EC" id="6.1.1.21"/>
    </reaction>
</comment>
<comment type="subunit">
    <text evidence="1">Homodimer.</text>
</comment>
<comment type="subcellular location">
    <subcellularLocation>
        <location evidence="1">Cytoplasm</location>
    </subcellularLocation>
</comment>
<comment type="similarity">
    <text evidence="1">Belongs to the class-II aminoacyl-tRNA synthetase family.</text>
</comment>
<reference key="1">
    <citation type="journal article" date="2006" name="Genome Res.">
        <title>Skewed genomic variability in strains of the toxigenic bacterial pathogen, Clostridium perfringens.</title>
        <authorList>
            <person name="Myers G.S.A."/>
            <person name="Rasko D.A."/>
            <person name="Cheung J.K."/>
            <person name="Ravel J."/>
            <person name="Seshadri R."/>
            <person name="DeBoy R.T."/>
            <person name="Ren Q."/>
            <person name="Varga J."/>
            <person name="Awad M.M."/>
            <person name="Brinkac L.M."/>
            <person name="Daugherty S.C."/>
            <person name="Haft D.H."/>
            <person name="Dodson R.J."/>
            <person name="Madupu R."/>
            <person name="Nelson W.C."/>
            <person name="Rosovitz M.J."/>
            <person name="Sullivan S.A."/>
            <person name="Khouri H."/>
            <person name="Dimitrov G.I."/>
            <person name="Watkins K.L."/>
            <person name="Mulligan S."/>
            <person name="Benton J."/>
            <person name="Radune D."/>
            <person name="Fisher D.J."/>
            <person name="Atkins H.S."/>
            <person name="Hiscox T."/>
            <person name="Jost B.H."/>
            <person name="Billington S.J."/>
            <person name="Songer J.G."/>
            <person name="McClane B.A."/>
            <person name="Titball R.W."/>
            <person name="Rood J.I."/>
            <person name="Melville S.B."/>
            <person name="Paulsen I.T."/>
        </authorList>
    </citation>
    <scope>NUCLEOTIDE SEQUENCE [LARGE SCALE GENOMIC DNA]</scope>
    <source>
        <strain>SM101 / Type A</strain>
    </source>
</reference>
<protein>
    <recommendedName>
        <fullName evidence="1">Histidine--tRNA ligase</fullName>
        <ecNumber evidence="1">6.1.1.21</ecNumber>
    </recommendedName>
    <alternativeName>
        <fullName evidence="1">Histidyl-tRNA synthetase</fullName>
        <shortName evidence="1">HisRS</shortName>
    </alternativeName>
</protein>